<evidence type="ECO:0000250" key="1"/>
<evidence type="ECO:0000250" key="2">
    <source>
        <dbReference type="UniProtKB" id="O81270"/>
    </source>
</evidence>
<evidence type="ECO:0000255" key="3"/>
<evidence type="ECO:0000269" key="4">
    <source>
    </source>
</evidence>
<evidence type="ECO:0000269" key="5">
    <source>
    </source>
</evidence>
<evidence type="ECO:0000269" key="6">
    <source>
    </source>
</evidence>
<evidence type="ECO:0000269" key="7">
    <source>
    </source>
</evidence>
<evidence type="ECO:0000269" key="8">
    <source>
    </source>
</evidence>
<evidence type="ECO:0000303" key="9">
    <source>
    </source>
</evidence>
<evidence type="ECO:0000305" key="10"/>
<evidence type="ECO:0007744" key="11">
    <source>
    </source>
</evidence>
<gene>
    <name type="primary">PXG3</name>
    <name type="synonym">CLO3</name>
    <name type="synonym">RD20</name>
    <name type="ordered locus">At2g33380</name>
    <name type="ORF">F4P9.15</name>
</gene>
<keyword id="KW-0007">Acetylation</keyword>
<keyword id="KW-0025">Alternative splicing</keyword>
<keyword id="KW-0106">Calcium</keyword>
<keyword id="KW-0150">Chloroplast</keyword>
<keyword id="KW-0256">Endoplasmic reticulum</keyword>
<keyword id="KW-0349">Heme</keyword>
<keyword id="KW-0408">Iron</keyword>
<keyword id="KW-0551">Lipid droplet</keyword>
<keyword id="KW-0472">Membrane</keyword>
<keyword id="KW-0479">Metal-binding</keyword>
<keyword id="KW-0492">Microsome</keyword>
<keyword id="KW-0560">Oxidoreductase</keyword>
<keyword id="KW-0597">Phosphoprotein</keyword>
<keyword id="KW-0934">Plastid</keyword>
<keyword id="KW-1185">Reference proteome</keyword>
<dbReference type="EC" id="1.11.2.3"/>
<dbReference type="EMBL" id="AB039924">
    <property type="protein sequence ID" value="BAB16823.1"/>
    <property type="molecule type" value="mRNA"/>
</dbReference>
<dbReference type="EMBL" id="AC002332">
    <property type="protein sequence ID" value="AAB80656.1"/>
    <property type="molecule type" value="Genomic_DNA"/>
</dbReference>
<dbReference type="EMBL" id="CP002685">
    <property type="protein sequence ID" value="AEC08825.1"/>
    <property type="molecule type" value="Genomic_DNA"/>
</dbReference>
<dbReference type="EMBL" id="CP002685">
    <property type="protein sequence ID" value="AEC08826.1"/>
    <property type="molecule type" value="Genomic_DNA"/>
</dbReference>
<dbReference type="EMBL" id="AY062661">
    <property type="protein sequence ID" value="AAL32739.1"/>
    <property type="molecule type" value="mRNA"/>
</dbReference>
<dbReference type="EMBL" id="AY063964">
    <property type="protein sequence ID" value="AAL36320.1"/>
    <property type="molecule type" value="mRNA"/>
</dbReference>
<dbReference type="EMBL" id="AY093321">
    <property type="protein sequence ID" value="AAM13320.1"/>
    <property type="molecule type" value="mRNA"/>
</dbReference>
<dbReference type="EMBL" id="AY096405">
    <property type="protein sequence ID" value="AAM20045.1"/>
    <property type="molecule type" value="mRNA"/>
</dbReference>
<dbReference type="EMBL" id="AK317039">
    <property type="protein sequence ID" value="BAH19732.1"/>
    <property type="molecule type" value="mRNA"/>
</dbReference>
<dbReference type="PIR" id="G84744">
    <property type="entry name" value="G84744"/>
</dbReference>
<dbReference type="RefSeq" id="NP_001031472.1">
    <molecule id="O22788-2"/>
    <property type="nucleotide sequence ID" value="NM_001036395.1"/>
</dbReference>
<dbReference type="RefSeq" id="NP_180896.1">
    <molecule id="O22788-1"/>
    <property type="nucleotide sequence ID" value="NM_128898.4"/>
</dbReference>
<dbReference type="BioGRID" id="3248">
    <property type="interactions" value="9"/>
</dbReference>
<dbReference type="FunCoup" id="O22788">
    <property type="interactions" value="51"/>
</dbReference>
<dbReference type="IntAct" id="O22788">
    <property type="interactions" value="2"/>
</dbReference>
<dbReference type="STRING" id="3702.O22788"/>
<dbReference type="iPTMnet" id="O22788"/>
<dbReference type="PaxDb" id="3702-AT2G33380.1"/>
<dbReference type="ProteomicsDB" id="226465">
    <molecule id="O22788-1"/>
</dbReference>
<dbReference type="EnsemblPlants" id="AT2G33380.1">
    <molecule id="O22788-1"/>
    <property type="protein sequence ID" value="AT2G33380.1"/>
    <property type="gene ID" value="AT2G33380"/>
</dbReference>
<dbReference type="EnsemblPlants" id="AT2G33380.2">
    <molecule id="O22788-2"/>
    <property type="protein sequence ID" value="AT2G33380.2"/>
    <property type="gene ID" value="AT2G33380"/>
</dbReference>
<dbReference type="GeneID" id="817901"/>
<dbReference type="Gramene" id="AT2G33380.1">
    <molecule id="O22788-1"/>
    <property type="protein sequence ID" value="AT2G33380.1"/>
    <property type="gene ID" value="AT2G33380"/>
</dbReference>
<dbReference type="Gramene" id="AT2G33380.2">
    <molecule id="O22788-2"/>
    <property type="protein sequence ID" value="AT2G33380.2"/>
    <property type="gene ID" value="AT2G33380"/>
</dbReference>
<dbReference type="KEGG" id="ath:AT2G33380"/>
<dbReference type="Araport" id="AT2G33380"/>
<dbReference type="TAIR" id="AT2G33380">
    <property type="gene designation" value="RD20"/>
</dbReference>
<dbReference type="eggNOG" id="ENOG502QQD0">
    <property type="taxonomic scope" value="Eukaryota"/>
</dbReference>
<dbReference type="InParanoid" id="O22788"/>
<dbReference type="OMA" id="FEFCEKS"/>
<dbReference type="OrthoDB" id="640742at2759"/>
<dbReference type="PhylomeDB" id="O22788"/>
<dbReference type="BRENDA" id="1.11.2.3">
    <property type="organism ID" value="399"/>
</dbReference>
<dbReference type="PRO" id="PR:O22788"/>
<dbReference type="Proteomes" id="UP000006548">
    <property type="component" value="Chromosome 2"/>
</dbReference>
<dbReference type="ExpressionAtlas" id="O22788">
    <property type="expression patterns" value="baseline and differential"/>
</dbReference>
<dbReference type="GO" id="GO:0031969">
    <property type="term" value="C:chloroplast membrane"/>
    <property type="evidence" value="ECO:0000314"/>
    <property type="project" value="TAIR"/>
</dbReference>
<dbReference type="GO" id="GO:0005783">
    <property type="term" value="C:endoplasmic reticulum"/>
    <property type="evidence" value="ECO:0007005"/>
    <property type="project" value="TAIR"/>
</dbReference>
<dbReference type="GO" id="GO:0043231">
    <property type="term" value="C:intracellular membrane-bounded organelle"/>
    <property type="evidence" value="ECO:0000314"/>
    <property type="project" value="TAIR"/>
</dbReference>
<dbReference type="GO" id="GO:0012511">
    <property type="term" value="C:monolayer-surrounded lipid storage body"/>
    <property type="evidence" value="ECO:0000314"/>
    <property type="project" value="TAIR"/>
</dbReference>
<dbReference type="GO" id="GO:0000325">
    <property type="term" value="C:plant-type vacuole"/>
    <property type="evidence" value="ECO:0007005"/>
    <property type="project" value="TAIR"/>
</dbReference>
<dbReference type="GO" id="GO:0005509">
    <property type="term" value="F:calcium ion binding"/>
    <property type="evidence" value="ECO:0000314"/>
    <property type="project" value="TAIR"/>
</dbReference>
<dbReference type="GO" id="GO:1990137">
    <property type="term" value="F:plant seed peroxygenase activity"/>
    <property type="evidence" value="ECO:0000314"/>
    <property type="project" value="TAIR"/>
</dbReference>
<dbReference type="GO" id="GO:1902609">
    <property type="term" value="P:(R)-2-hydroxy-alpha-linolenic acid biosynthetic process"/>
    <property type="evidence" value="ECO:0000315"/>
    <property type="project" value="TAIR"/>
</dbReference>
<dbReference type="GO" id="GO:0050832">
    <property type="term" value="P:defense response to fungus"/>
    <property type="evidence" value="ECO:0000314"/>
    <property type="project" value="TAIR"/>
</dbReference>
<dbReference type="GO" id="GO:0031407">
    <property type="term" value="P:oxylipin metabolic process"/>
    <property type="evidence" value="ECO:0000314"/>
    <property type="project" value="TAIR"/>
</dbReference>
<dbReference type="GO" id="GO:2000377">
    <property type="term" value="P:regulation of reactive oxygen species metabolic process"/>
    <property type="evidence" value="ECO:0000315"/>
    <property type="project" value="TAIR"/>
</dbReference>
<dbReference type="GO" id="GO:0009737">
    <property type="term" value="P:response to abscisic acid"/>
    <property type="evidence" value="ECO:0000270"/>
    <property type="project" value="TAIR"/>
</dbReference>
<dbReference type="GO" id="GO:0009409">
    <property type="term" value="P:response to cold"/>
    <property type="evidence" value="ECO:0000270"/>
    <property type="project" value="TAIR"/>
</dbReference>
<dbReference type="GO" id="GO:0009269">
    <property type="term" value="P:response to desiccation"/>
    <property type="evidence" value="ECO:0000270"/>
    <property type="project" value="TAIR"/>
</dbReference>
<dbReference type="GO" id="GO:0009620">
    <property type="term" value="P:response to fungus"/>
    <property type="evidence" value="ECO:0000270"/>
    <property type="project" value="TAIR"/>
</dbReference>
<dbReference type="GO" id="GO:0009751">
    <property type="term" value="P:response to salicylic acid"/>
    <property type="evidence" value="ECO:0000270"/>
    <property type="project" value="TAIR"/>
</dbReference>
<dbReference type="GO" id="GO:0009651">
    <property type="term" value="P:response to salt stress"/>
    <property type="evidence" value="ECO:0000270"/>
    <property type="project" value="TAIR"/>
</dbReference>
<dbReference type="GO" id="GO:0010118">
    <property type="term" value="P:stomatal movement"/>
    <property type="evidence" value="ECO:0000315"/>
    <property type="project" value="TAIR"/>
</dbReference>
<dbReference type="InterPro" id="IPR007736">
    <property type="entry name" value="Caleosin-related"/>
</dbReference>
<dbReference type="PANTHER" id="PTHR31495">
    <property type="entry name" value="PEROXYGENASE 3-RELATED"/>
    <property type="match status" value="1"/>
</dbReference>
<dbReference type="PANTHER" id="PTHR31495:SF48">
    <property type="entry name" value="PEROXYGENASE 3-RELATED"/>
    <property type="match status" value="1"/>
</dbReference>
<dbReference type="Pfam" id="PF05042">
    <property type="entry name" value="Caleosin"/>
    <property type="match status" value="1"/>
</dbReference>
<comment type="function">
    <text evidence="6 7">Probable calcium-binding peroxygenase. May be involved in the degradation of storage lipid in oil bodies, in abiotic stress-related signaling pathway and in drought tolerance through stomatal control under water deficit conditions.</text>
</comment>
<comment type="catalytic activity">
    <reaction>
        <text>RH + ROOH = ROH + ROH.</text>
        <dbReference type="EC" id="1.11.2.3"/>
    </reaction>
</comment>
<comment type="cofactor">
    <cofactor evidence="1">
        <name>heme b</name>
        <dbReference type="ChEBI" id="CHEBI:60344"/>
    </cofactor>
    <text evidence="1">Binds 1 heme b (iron(II)-protoporphyrin IX) group.</text>
</comment>
<comment type="cofactor">
    <cofactor evidence="6">
        <name>Ca(2+)</name>
        <dbReference type="ChEBI" id="CHEBI:29108"/>
    </cofactor>
</comment>
<comment type="subunit">
    <text evidence="1">Homodimer.</text>
</comment>
<comment type="subcellular location">
    <subcellularLocation>
        <location>Microsome membrane</location>
    </subcellularLocation>
    <subcellularLocation>
        <location>Plastid</location>
        <location>Chloroplast membrane</location>
    </subcellularLocation>
    <subcellularLocation>
        <location>Lipid droplet</location>
    </subcellularLocation>
</comment>
<comment type="alternative products">
    <event type="alternative splicing"/>
    <isoform>
        <id>O22788-1</id>
        <name>1</name>
        <sequence type="displayed"/>
    </isoform>
    <isoform>
        <id>O22788-2</id>
        <name>2</name>
        <sequence type="described" ref="VSP_042286"/>
    </isoform>
</comment>
<comment type="tissue specificity">
    <text evidence="4 5 6 7">Expressed in cotyledons, hypocotyls, leaves, shoots, flowers, stems, siliques, hydatodes, trichome bases and guard cells. Not detected in roots, mature brown siliques or mature dry seeds.</text>
</comment>
<comment type="developmental stage">
    <text evidence="7">Expressed in the first days following fertilization, but not in mature seeds.</text>
</comment>
<comment type="induction">
    <text evidence="4 5 6 7 8">Up-regulated by drought, abscisic acid, osmotic stress, salicylic acid, wounding and pathogens, but very low induction by jasmonic acid.</text>
</comment>
<comment type="domain">
    <text>Transmembrane regions are predicted by sequence analysis tools, but these regions probably constitute hydrophobic domains associated to phospholipids.</text>
</comment>
<comment type="domain">
    <text>The proline-knot motif (113-122) may be involved in targeting to lipid bodies.</text>
</comment>
<comment type="PTM">
    <text evidence="6">Phosphorylated. Increased phosphorylation upon stress.</text>
</comment>
<comment type="disruption phenotype">
    <text evidence="7 8">Increased drought and salt stress sensitivity. Delayed seed germination and reduced cotyledon opening and greening in presence of abscisic acid.</text>
</comment>
<comment type="miscellaneous">
    <text>The N-terminus is facing into the microsomal vesicles.</text>
</comment>
<comment type="similarity">
    <text evidence="10">Belongs to the caleosin family.</text>
</comment>
<feature type="initiator methionine" description="Removed" evidence="11">
    <location>
        <position position="1"/>
    </location>
</feature>
<feature type="chain" id="PRO_0000415554" description="Probable peroxygenase 3">
    <location>
        <begin position="2"/>
        <end position="236"/>
    </location>
</feature>
<feature type="domain" description="EF-hand">
    <location>
        <begin position="57"/>
        <end position="92"/>
    </location>
</feature>
<feature type="short sequence motif" description="Proline-knot">
    <location>
        <begin position="113"/>
        <end position="122"/>
    </location>
</feature>
<feature type="binding site" description="axial binding residue" evidence="1">
    <location>
        <position position="65"/>
    </location>
    <ligand>
        <name>heme</name>
        <dbReference type="ChEBI" id="CHEBI:30413"/>
    </ligand>
    <ligandPart>
        <name>Fe</name>
        <dbReference type="ChEBI" id="CHEBI:18248"/>
    </ligandPart>
</feature>
<feature type="binding site" evidence="3">
    <location>
        <position position="70"/>
    </location>
    <ligand>
        <name>Ca(2+)</name>
        <dbReference type="ChEBI" id="CHEBI:29108"/>
    </ligand>
</feature>
<feature type="binding site" evidence="3">
    <location>
        <position position="72"/>
    </location>
    <ligand>
        <name>Ca(2+)</name>
        <dbReference type="ChEBI" id="CHEBI:29108"/>
    </ligand>
</feature>
<feature type="binding site" evidence="3">
    <location>
        <position position="74"/>
    </location>
    <ligand>
        <name>Ca(2+)</name>
        <dbReference type="ChEBI" id="CHEBI:29108"/>
    </ligand>
</feature>
<feature type="binding site" evidence="3">
    <location>
        <position position="81"/>
    </location>
    <ligand>
        <name>Ca(2+)</name>
        <dbReference type="ChEBI" id="CHEBI:29108"/>
    </ligand>
</feature>
<feature type="modified residue" description="N-acetylalanine" evidence="11">
    <location>
        <position position="2"/>
    </location>
</feature>
<feature type="modified residue" description="Phosphoserine" evidence="2">
    <location>
        <position position="220"/>
    </location>
</feature>
<feature type="splice variant" id="VSP_042286" description="In isoform 2." evidence="9">
    <location>
        <begin position="146"/>
        <end position="187"/>
    </location>
</feature>
<protein>
    <recommendedName>
        <fullName>Probable peroxygenase 3</fullName>
        <shortName>AtPXG3</shortName>
        <ecNumber>1.11.2.3</ecNumber>
    </recommendedName>
    <alternativeName>
        <fullName>Caleosin-3</fullName>
    </alternativeName>
    <alternativeName>
        <fullName>Protein RESPONSIVE TO DESICCATION 20</fullName>
    </alternativeName>
</protein>
<accession>O22788</accession>
<accession>B9DG65</accession>
<name>PXG3_ARATH</name>
<organism>
    <name type="scientific">Arabidopsis thaliana</name>
    <name type="common">Mouse-ear cress</name>
    <dbReference type="NCBI Taxonomy" id="3702"/>
    <lineage>
        <taxon>Eukaryota</taxon>
        <taxon>Viridiplantae</taxon>
        <taxon>Streptophyta</taxon>
        <taxon>Embryophyta</taxon>
        <taxon>Tracheophyta</taxon>
        <taxon>Spermatophyta</taxon>
        <taxon>Magnoliopsida</taxon>
        <taxon>eudicotyledons</taxon>
        <taxon>Gunneridae</taxon>
        <taxon>Pentapetalae</taxon>
        <taxon>rosids</taxon>
        <taxon>malvids</taxon>
        <taxon>Brassicales</taxon>
        <taxon>Brassicaceae</taxon>
        <taxon>Camelineae</taxon>
        <taxon>Arabidopsis</taxon>
    </lineage>
</organism>
<reference key="1">
    <citation type="journal article" date="1992" name="Plant Cell Physiol.">
        <title>Molecular cloning and characterization of 9 cDNAs for genes that are responsive to desiccation in Arabidopsis thaliana: sequence analysis of one cDNA clone that encodes a putative transmembrane channel protein.</title>
        <authorList>
            <person name="Yamaguchi-Shinozaki K."/>
            <person name="Koizumi M."/>
            <person name="Urao S."/>
            <person name="Shinozaki K."/>
        </authorList>
    </citation>
    <scope>NUCLEOTIDE SEQUENCE [MRNA] (ISOFORM 1)</scope>
</reference>
<reference key="2">
    <citation type="journal article" date="2000" name="Plant Cell Physiol.">
        <title>An Arabidopsis gene encoding a Ca2+-binding protein is induced by abscisic acid during dehydration.</title>
        <authorList>
            <person name="Takahashi S."/>
            <person name="Katagiri T."/>
            <person name="Yamaguchi-Shinozaki K."/>
            <person name="Shinozaki K."/>
        </authorList>
    </citation>
    <scope>NUCLEOTIDE SEQUENCE [MRNA] (ISOFORM 1)</scope>
    <scope>INDUCTION</scope>
    <scope>CALCIUM-BINDING</scope>
    <scope>TISSUE SPECIFICITY</scope>
</reference>
<reference key="3">
    <citation type="journal article" date="1999" name="Nature">
        <title>Sequence and analysis of chromosome 2 of the plant Arabidopsis thaliana.</title>
        <authorList>
            <person name="Lin X."/>
            <person name="Kaul S."/>
            <person name="Rounsley S.D."/>
            <person name="Shea T.P."/>
            <person name="Benito M.-I."/>
            <person name="Town C.D."/>
            <person name="Fujii C.Y."/>
            <person name="Mason T.M."/>
            <person name="Bowman C.L."/>
            <person name="Barnstead M.E."/>
            <person name="Feldblyum T.V."/>
            <person name="Buell C.R."/>
            <person name="Ketchum K.A."/>
            <person name="Lee J.J."/>
            <person name="Ronning C.M."/>
            <person name="Koo H.L."/>
            <person name="Moffat K.S."/>
            <person name="Cronin L.A."/>
            <person name="Shen M."/>
            <person name="Pai G."/>
            <person name="Van Aken S."/>
            <person name="Umayam L."/>
            <person name="Tallon L.J."/>
            <person name="Gill J.E."/>
            <person name="Adams M.D."/>
            <person name="Carrera A.J."/>
            <person name="Creasy T.H."/>
            <person name="Goodman H.M."/>
            <person name="Somerville C.R."/>
            <person name="Copenhaver G.P."/>
            <person name="Preuss D."/>
            <person name="Nierman W.C."/>
            <person name="White O."/>
            <person name="Eisen J.A."/>
            <person name="Salzberg S.L."/>
            <person name="Fraser C.M."/>
            <person name="Venter J.C."/>
        </authorList>
    </citation>
    <scope>NUCLEOTIDE SEQUENCE [LARGE SCALE GENOMIC DNA]</scope>
    <source>
        <strain>cv. Columbia</strain>
    </source>
</reference>
<reference key="4">
    <citation type="journal article" date="2017" name="Plant J.">
        <title>Araport11: a complete reannotation of the Arabidopsis thaliana reference genome.</title>
        <authorList>
            <person name="Cheng C.Y."/>
            <person name="Krishnakumar V."/>
            <person name="Chan A.P."/>
            <person name="Thibaud-Nissen F."/>
            <person name="Schobel S."/>
            <person name="Town C.D."/>
        </authorList>
    </citation>
    <scope>GENOME REANNOTATION</scope>
    <source>
        <strain>cv. Columbia</strain>
    </source>
</reference>
<reference key="5">
    <citation type="journal article" date="2003" name="Science">
        <title>Empirical analysis of transcriptional activity in the Arabidopsis genome.</title>
        <authorList>
            <person name="Yamada K."/>
            <person name="Lim J."/>
            <person name="Dale J.M."/>
            <person name="Chen H."/>
            <person name="Shinn P."/>
            <person name="Palm C.J."/>
            <person name="Southwick A.M."/>
            <person name="Wu H.C."/>
            <person name="Kim C.J."/>
            <person name="Nguyen M."/>
            <person name="Pham P.K."/>
            <person name="Cheuk R.F."/>
            <person name="Karlin-Newmann G."/>
            <person name="Liu S.X."/>
            <person name="Lam B."/>
            <person name="Sakano H."/>
            <person name="Wu T."/>
            <person name="Yu G."/>
            <person name="Miranda M."/>
            <person name="Quach H.L."/>
            <person name="Tripp M."/>
            <person name="Chang C.H."/>
            <person name="Lee J.M."/>
            <person name="Toriumi M.J."/>
            <person name="Chan M.M."/>
            <person name="Tang C.C."/>
            <person name="Onodera C.S."/>
            <person name="Deng J.M."/>
            <person name="Akiyama K."/>
            <person name="Ansari Y."/>
            <person name="Arakawa T."/>
            <person name="Banh J."/>
            <person name="Banno F."/>
            <person name="Bowser L."/>
            <person name="Brooks S.Y."/>
            <person name="Carninci P."/>
            <person name="Chao Q."/>
            <person name="Choy N."/>
            <person name="Enju A."/>
            <person name="Goldsmith A.D."/>
            <person name="Gurjal M."/>
            <person name="Hansen N.F."/>
            <person name="Hayashizaki Y."/>
            <person name="Johnson-Hopson C."/>
            <person name="Hsuan V.W."/>
            <person name="Iida K."/>
            <person name="Karnes M."/>
            <person name="Khan S."/>
            <person name="Koesema E."/>
            <person name="Ishida J."/>
            <person name="Jiang P.X."/>
            <person name="Jones T."/>
            <person name="Kawai J."/>
            <person name="Kamiya A."/>
            <person name="Meyers C."/>
            <person name="Nakajima M."/>
            <person name="Narusaka M."/>
            <person name="Seki M."/>
            <person name="Sakurai T."/>
            <person name="Satou M."/>
            <person name="Tamse R."/>
            <person name="Vaysberg M."/>
            <person name="Wallender E.K."/>
            <person name="Wong C."/>
            <person name="Yamamura Y."/>
            <person name="Yuan S."/>
            <person name="Shinozaki K."/>
            <person name="Davis R.W."/>
            <person name="Theologis A."/>
            <person name="Ecker J.R."/>
        </authorList>
    </citation>
    <scope>NUCLEOTIDE SEQUENCE [LARGE SCALE MRNA] (ISOFORM 1)</scope>
    <source>
        <strain>cv. Columbia</strain>
    </source>
</reference>
<reference key="6">
    <citation type="journal article" date="2009" name="DNA Res.">
        <title>Analysis of multiple occurrences of alternative splicing events in Arabidopsis thaliana using novel sequenced full-length cDNAs.</title>
        <authorList>
            <person name="Iida K."/>
            <person name="Fukami-Kobayashi K."/>
            <person name="Toyoda A."/>
            <person name="Sakaki Y."/>
            <person name="Kobayashi M."/>
            <person name="Seki M."/>
            <person name="Shinozaki K."/>
        </authorList>
    </citation>
    <scope>NUCLEOTIDE SEQUENCE [LARGE SCALE MRNA] (ISOFORM 2)</scope>
    <source>
        <strain>cv. Columbia</strain>
        <tissue>Rosette leaf</tissue>
    </source>
</reference>
<reference key="7">
    <citation type="journal article" date="2000" name="Plant Mol. Biol.">
        <title>Caleosins: Ca2+-binding proteins associated with lipid bodies.</title>
        <authorList>
            <person name="Naested H."/>
            <person name="Frandsen G.I."/>
            <person name="Jauh G.Y."/>
            <person name="Hernandez-Pinzon I."/>
            <person name="Nielsen H.B."/>
            <person name="Murphy D.J."/>
            <person name="Rogers J.C."/>
            <person name="Mundy J."/>
        </authorList>
    </citation>
    <scope>GENE FAMILY</scope>
    <scope>NOMENCLATURE</scope>
    <scope>TISSUE SPECIFICITY</scope>
    <scope>INDUCTION</scope>
</reference>
<reference key="8">
    <citation type="journal article" date="2009" name="Plant Physiol. Biochem.">
        <title>Roles of a membrane-bound caleosin and putative peroxygenase in biotic and abiotic stress responses in Arabidopsis.</title>
        <authorList>
            <person name="Partridge M."/>
            <person name="Murphy D.J."/>
        </authorList>
    </citation>
    <scope>INDUCTION</scope>
    <scope>FUNCTION</scope>
    <scope>TISSUE SPECIFICITY</scope>
    <scope>SUBCELLULAR LOCATION</scope>
    <scope>COFACTOR</scope>
    <scope>PHOSPHORYLATION</scope>
    <source>
        <strain>cv. Columbia</strain>
    </source>
</reference>
<reference key="9">
    <citation type="journal article" date="2010" name="Plant Cell Physiol.">
        <title>RD20, a stress-inducible caleosin, participates in stomatal control, transpiration and drought tolerance in Arabidopsis thaliana.</title>
        <authorList>
            <person name="Aubert Y."/>
            <person name="Vile D."/>
            <person name="Pervent M."/>
            <person name="Aldon D."/>
            <person name="Ranty B."/>
            <person name="Simonneau T."/>
            <person name="Vavasseur A."/>
            <person name="Galaud J.P."/>
        </authorList>
    </citation>
    <scope>FUNCTION</scope>
    <scope>SUBCELLULAR LOCATION</scope>
    <scope>DEVELOPMENTAL STAGE</scope>
    <scope>TISSUE SPECIFICITY</scope>
    <scope>INDUCTION</scope>
    <scope>DISRUPTION PHENOTYPE</scope>
    <source>
        <strain>cv. Wassilewskija</strain>
    </source>
</reference>
<reference key="10">
    <citation type="journal article" date="2011" name="Plant Signal. Behav.">
        <title>Involvement of RD20, a member of caleosin family, in ABA-mediated regulation of germination in Arabidopsis thaliana.</title>
        <authorList>
            <person name="Aubert Y."/>
            <person name="Leba L.J."/>
            <person name="Cheval C."/>
            <person name="Ranty B."/>
            <person name="Vavasseur A."/>
            <person name="Aldon D."/>
            <person name="Galaud J.P."/>
        </authorList>
    </citation>
    <scope>INDUCTION</scope>
    <scope>DISRUPTION PHENOTYPE</scope>
</reference>
<reference key="11">
    <citation type="journal article" date="2012" name="Mol. Cell. Proteomics">
        <title>Comparative large-scale characterisation of plant vs. mammal proteins reveals similar and idiosyncratic N-alpha acetylation features.</title>
        <authorList>
            <person name="Bienvenut W.V."/>
            <person name="Sumpton D."/>
            <person name="Martinez A."/>
            <person name="Lilla S."/>
            <person name="Espagne C."/>
            <person name="Meinnel T."/>
            <person name="Giglione C."/>
        </authorList>
    </citation>
    <scope>ACETYLATION [LARGE SCALE ANALYSIS] AT ALA-2</scope>
    <scope>CLEAVAGE OF INITIATOR METHIONINE [LARGE SCALE ANALYSIS]</scope>
    <scope>IDENTIFICATION BY MASS SPECTROMETRY [LARGE SCALE ANALYSIS]</scope>
</reference>
<sequence length="236" mass="26600">MAGEAEALATTAPLAPVTSQRKVRNDLEETLPKPYMARALAAPDTEHPNGTEGHDSKGMSVMQQHVAFFDQNDDGIVYPWETYKGFRDLGFNPISSIFWTLLINLAFSYVTLPSWVPSPLLPVYIDNIHKAKHGSDSSTYDTEGRYVPVNLENIFSKYALTVKDKLSFKEVWNVTEGNRMAIDPFGWLSNKVEWILLYILAKDEDGFLSKEAVRGCFDGSLFEQIAKERANSRKQD</sequence>
<proteinExistence type="evidence at protein level"/>